<proteinExistence type="inferred from homology"/>
<name>ISPF_CHLTR</name>
<feature type="chain" id="PRO_0000189455" description="2-C-methyl-D-erythritol 2,4-cyclodiphosphate synthase">
    <location>
        <begin position="1"/>
        <end position="178"/>
    </location>
</feature>
<feature type="binding site" evidence="1">
    <location>
        <begin position="24"/>
        <end position="26"/>
    </location>
    <ligand>
        <name>4-CDP-2-C-methyl-D-erythritol 2-phosphate</name>
        <dbReference type="ChEBI" id="CHEBI:57919"/>
    </ligand>
</feature>
<feature type="binding site" evidence="1">
    <location>
        <position position="24"/>
    </location>
    <ligand>
        <name>a divalent metal cation</name>
        <dbReference type="ChEBI" id="CHEBI:60240"/>
    </ligand>
</feature>
<feature type="binding site" evidence="1">
    <location>
        <position position="26"/>
    </location>
    <ligand>
        <name>a divalent metal cation</name>
        <dbReference type="ChEBI" id="CHEBI:60240"/>
    </ligand>
</feature>
<feature type="binding site" evidence="1">
    <location>
        <position position="61"/>
    </location>
    <ligand>
        <name>a divalent metal cation</name>
        <dbReference type="ChEBI" id="CHEBI:60240"/>
    </ligand>
</feature>
<feature type="binding site" evidence="1">
    <location>
        <begin position="150"/>
        <end position="153"/>
    </location>
    <ligand>
        <name>4-CDP-2-C-methyl-D-erythritol 2-phosphate</name>
        <dbReference type="ChEBI" id="CHEBI:57919"/>
    </ligand>
</feature>
<feature type="site" description="Transition state stabilizer" evidence="1">
    <location>
        <position position="53"/>
    </location>
</feature>
<feature type="site" description="Transition state stabilizer" evidence="1">
    <location>
        <position position="151"/>
    </location>
</feature>
<protein>
    <recommendedName>
        <fullName evidence="1">2-C-methyl-D-erythritol 2,4-cyclodiphosphate synthase</fullName>
        <shortName evidence="1">MECDP-synthase</shortName>
        <shortName evidence="1">MECPP-synthase</shortName>
        <shortName evidence="1">MECPS</shortName>
        <ecNumber evidence="1">4.6.1.12</ecNumber>
    </recommendedName>
</protein>
<reference key="1">
    <citation type="journal article" date="1998" name="Science">
        <title>Genome sequence of an obligate intracellular pathogen of humans: Chlamydia trachomatis.</title>
        <authorList>
            <person name="Stephens R.S."/>
            <person name="Kalman S."/>
            <person name="Lammel C.J."/>
            <person name="Fan J."/>
            <person name="Marathe R."/>
            <person name="Aravind L."/>
            <person name="Mitchell W.P."/>
            <person name="Olinger L."/>
            <person name="Tatusov R.L."/>
            <person name="Zhao Q."/>
            <person name="Koonin E.V."/>
            <person name="Davis R.W."/>
        </authorList>
    </citation>
    <scope>NUCLEOTIDE SEQUENCE [LARGE SCALE GENOMIC DNA]</scope>
    <source>
        <strain>ATCC VR-885 / DSM 19411 / UW-3/Cx</strain>
    </source>
</reference>
<gene>
    <name evidence="1" type="primary">ispF</name>
    <name type="ordered locus">CT_434</name>
</gene>
<keyword id="KW-0414">Isoprene biosynthesis</keyword>
<keyword id="KW-0456">Lyase</keyword>
<keyword id="KW-0479">Metal-binding</keyword>
<keyword id="KW-1185">Reference proteome</keyword>
<accession>O84441</accession>
<dbReference type="EC" id="4.6.1.12" evidence="1"/>
<dbReference type="EMBL" id="AE001273">
    <property type="protein sequence ID" value="AAC68033.1"/>
    <property type="molecule type" value="Genomic_DNA"/>
</dbReference>
<dbReference type="PIR" id="C71514">
    <property type="entry name" value="C71514"/>
</dbReference>
<dbReference type="RefSeq" id="WP_009871789.1">
    <property type="nucleotide sequence ID" value="NC_000117.1"/>
</dbReference>
<dbReference type="SMR" id="O84441"/>
<dbReference type="FunCoup" id="O84441">
    <property type="interactions" value="236"/>
</dbReference>
<dbReference type="STRING" id="272561.CT_434"/>
<dbReference type="EnsemblBacteria" id="AAC68033">
    <property type="protein sequence ID" value="AAC68033"/>
    <property type="gene ID" value="CT_434"/>
</dbReference>
<dbReference type="KEGG" id="ctr:CT_434"/>
<dbReference type="PATRIC" id="fig|272561.5.peg.469"/>
<dbReference type="HOGENOM" id="CLU_084630_2_0_0"/>
<dbReference type="InParanoid" id="O84441"/>
<dbReference type="OrthoDB" id="9804336at2"/>
<dbReference type="UniPathway" id="UPA00056">
    <property type="reaction ID" value="UER00095"/>
</dbReference>
<dbReference type="Proteomes" id="UP000000431">
    <property type="component" value="Chromosome"/>
</dbReference>
<dbReference type="GO" id="GO:0008685">
    <property type="term" value="F:2-C-methyl-D-erythritol 2,4-cyclodiphosphate synthase activity"/>
    <property type="evidence" value="ECO:0000318"/>
    <property type="project" value="GO_Central"/>
</dbReference>
<dbReference type="GO" id="GO:0046872">
    <property type="term" value="F:metal ion binding"/>
    <property type="evidence" value="ECO:0007669"/>
    <property type="project" value="UniProtKB-KW"/>
</dbReference>
<dbReference type="GO" id="GO:0019288">
    <property type="term" value="P:isopentenyl diphosphate biosynthetic process, methylerythritol 4-phosphate pathway"/>
    <property type="evidence" value="ECO:0007669"/>
    <property type="project" value="UniProtKB-UniRule"/>
</dbReference>
<dbReference type="GO" id="GO:0016114">
    <property type="term" value="P:terpenoid biosynthetic process"/>
    <property type="evidence" value="ECO:0007669"/>
    <property type="project" value="InterPro"/>
</dbReference>
<dbReference type="CDD" id="cd00554">
    <property type="entry name" value="MECDP_synthase"/>
    <property type="match status" value="1"/>
</dbReference>
<dbReference type="FunFam" id="3.30.1330.50:FF:000006">
    <property type="entry name" value="2-C-methyl-D-erythritol 2,4-cyclodiphosphate synthase"/>
    <property type="match status" value="1"/>
</dbReference>
<dbReference type="Gene3D" id="3.30.1330.50">
    <property type="entry name" value="2-C-methyl-D-erythritol 2,4-cyclodiphosphate synthase"/>
    <property type="match status" value="1"/>
</dbReference>
<dbReference type="HAMAP" id="MF_00107">
    <property type="entry name" value="IspF"/>
    <property type="match status" value="1"/>
</dbReference>
<dbReference type="InterPro" id="IPR003526">
    <property type="entry name" value="MECDP_synthase"/>
</dbReference>
<dbReference type="InterPro" id="IPR020555">
    <property type="entry name" value="MECDP_synthase_CS"/>
</dbReference>
<dbReference type="InterPro" id="IPR036571">
    <property type="entry name" value="MECDP_synthase_sf"/>
</dbReference>
<dbReference type="NCBIfam" id="TIGR00151">
    <property type="entry name" value="ispF"/>
    <property type="match status" value="1"/>
</dbReference>
<dbReference type="PANTHER" id="PTHR43181">
    <property type="entry name" value="2-C-METHYL-D-ERYTHRITOL 2,4-CYCLODIPHOSPHATE SYNTHASE, CHLOROPLASTIC"/>
    <property type="match status" value="1"/>
</dbReference>
<dbReference type="PANTHER" id="PTHR43181:SF1">
    <property type="entry name" value="2-C-METHYL-D-ERYTHRITOL 2,4-CYCLODIPHOSPHATE SYNTHASE, CHLOROPLASTIC"/>
    <property type="match status" value="1"/>
</dbReference>
<dbReference type="Pfam" id="PF02542">
    <property type="entry name" value="YgbB"/>
    <property type="match status" value="1"/>
</dbReference>
<dbReference type="SUPFAM" id="SSF69765">
    <property type="entry name" value="IpsF-like"/>
    <property type="match status" value="1"/>
</dbReference>
<dbReference type="PROSITE" id="PS01350">
    <property type="entry name" value="ISPF"/>
    <property type="match status" value="1"/>
</dbReference>
<sequence length="178" mass="19446">MTEIPSSFVLPDPEWIYRVGIGQDSHRFLPDEDPKPCILGGIIFENTPGFEANSDGDVVFHAICNAFSSVTHKGILGGLADELLKTKGITDSVVYLQEAVASLKPTQRVSHLAITIEGKRPKLLPQLPSMRKRIAEVLHIPLDSINITATSGEGLTAMGQGYGVQCFCVLTIMEYCRY</sequence>
<comment type="function">
    <text evidence="1">Involved in the biosynthesis of isopentenyl diphosphate (IPP) and dimethylallyl diphosphate (DMAPP), two major building blocks of isoprenoid compounds. Catalyzes the conversion of 4-diphosphocytidyl-2-C-methyl-D-erythritol 2-phosphate (CDP-ME2P) to 2-C-methyl-D-erythritol 2,4-cyclodiphosphate (ME-CPP) with a corresponding release of cytidine 5-monophosphate (CMP).</text>
</comment>
<comment type="catalytic activity">
    <reaction evidence="1">
        <text>4-CDP-2-C-methyl-D-erythritol 2-phosphate = 2-C-methyl-D-erythritol 2,4-cyclic diphosphate + CMP</text>
        <dbReference type="Rhea" id="RHEA:23864"/>
        <dbReference type="ChEBI" id="CHEBI:57919"/>
        <dbReference type="ChEBI" id="CHEBI:58483"/>
        <dbReference type="ChEBI" id="CHEBI:60377"/>
        <dbReference type="EC" id="4.6.1.12"/>
    </reaction>
</comment>
<comment type="cofactor">
    <cofactor evidence="1">
        <name>a divalent metal cation</name>
        <dbReference type="ChEBI" id="CHEBI:60240"/>
    </cofactor>
    <text evidence="1">Binds 1 divalent metal cation per subunit.</text>
</comment>
<comment type="pathway">
    <text evidence="1">Isoprenoid biosynthesis; isopentenyl diphosphate biosynthesis via DXP pathway; isopentenyl diphosphate from 1-deoxy-D-xylulose 5-phosphate: step 4/6.</text>
</comment>
<comment type="subunit">
    <text evidence="1">Homotrimer.</text>
</comment>
<comment type="similarity">
    <text evidence="1">Belongs to the IspF family.</text>
</comment>
<evidence type="ECO:0000255" key="1">
    <source>
        <dbReference type="HAMAP-Rule" id="MF_00107"/>
    </source>
</evidence>
<organism>
    <name type="scientific">Chlamydia trachomatis serovar D (strain ATCC VR-885 / DSM 19411 / UW-3/Cx)</name>
    <dbReference type="NCBI Taxonomy" id="272561"/>
    <lineage>
        <taxon>Bacteria</taxon>
        <taxon>Pseudomonadati</taxon>
        <taxon>Chlamydiota</taxon>
        <taxon>Chlamydiia</taxon>
        <taxon>Chlamydiales</taxon>
        <taxon>Chlamydiaceae</taxon>
        <taxon>Chlamydia/Chlamydophila group</taxon>
        <taxon>Chlamydia</taxon>
    </lineage>
</organism>